<organism>
    <name type="scientific">Chlamydia abortus (strain DSM 27085 / S26/3)</name>
    <name type="common">Chlamydophila abortus</name>
    <dbReference type="NCBI Taxonomy" id="218497"/>
    <lineage>
        <taxon>Bacteria</taxon>
        <taxon>Pseudomonadati</taxon>
        <taxon>Chlamydiota</taxon>
        <taxon>Chlamydiia</taxon>
        <taxon>Chlamydiales</taxon>
        <taxon>Chlamydiaceae</taxon>
        <taxon>Chlamydia/Chlamydophila group</taxon>
        <taxon>Chlamydia</taxon>
    </lineage>
</organism>
<accession>Q5L711</accession>
<comment type="function">
    <text evidence="1">One of the primary rRNA binding proteins, it binds specifically to the 5'-end of 16S ribosomal RNA.</text>
</comment>
<comment type="subunit">
    <text evidence="1">Part of the 30S ribosomal subunit.</text>
</comment>
<comment type="similarity">
    <text evidence="1">Belongs to the universal ribosomal protein uS17 family.</text>
</comment>
<feature type="chain" id="PRO_0000233455" description="Small ribosomal subunit protein uS17">
    <location>
        <begin position="1"/>
        <end position="83"/>
    </location>
</feature>
<sequence>MASEVRGLRKTKIGVVVSSKMDKTVVVRVERIYSHPQYAKVVRDSRKFYAHDGLGVSEGDKVKIQETRPLSKLKRWRVVERVS</sequence>
<evidence type="ECO:0000255" key="1">
    <source>
        <dbReference type="HAMAP-Rule" id="MF_01345"/>
    </source>
</evidence>
<evidence type="ECO:0000305" key="2"/>
<dbReference type="EMBL" id="CR848038">
    <property type="protein sequence ID" value="CAH63559.1"/>
    <property type="molecule type" value="Genomic_DNA"/>
</dbReference>
<dbReference type="RefSeq" id="WP_011096829.1">
    <property type="nucleotide sequence ID" value="NC_004552.2"/>
</dbReference>
<dbReference type="SMR" id="Q5L711"/>
<dbReference type="GeneID" id="93024648"/>
<dbReference type="KEGG" id="cab:CAB101"/>
<dbReference type="eggNOG" id="COG0186">
    <property type="taxonomic scope" value="Bacteria"/>
</dbReference>
<dbReference type="HOGENOM" id="CLU_073626_1_0_0"/>
<dbReference type="OrthoDB" id="9811714at2"/>
<dbReference type="Proteomes" id="UP000001012">
    <property type="component" value="Chromosome"/>
</dbReference>
<dbReference type="GO" id="GO:0022627">
    <property type="term" value="C:cytosolic small ribosomal subunit"/>
    <property type="evidence" value="ECO:0007669"/>
    <property type="project" value="TreeGrafter"/>
</dbReference>
<dbReference type="GO" id="GO:0019843">
    <property type="term" value="F:rRNA binding"/>
    <property type="evidence" value="ECO:0007669"/>
    <property type="project" value="UniProtKB-UniRule"/>
</dbReference>
<dbReference type="GO" id="GO:0003735">
    <property type="term" value="F:structural constituent of ribosome"/>
    <property type="evidence" value="ECO:0007669"/>
    <property type="project" value="InterPro"/>
</dbReference>
<dbReference type="GO" id="GO:0006412">
    <property type="term" value="P:translation"/>
    <property type="evidence" value="ECO:0007669"/>
    <property type="project" value="UniProtKB-UniRule"/>
</dbReference>
<dbReference type="CDD" id="cd00364">
    <property type="entry name" value="Ribosomal_uS17"/>
    <property type="match status" value="1"/>
</dbReference>
<dbReference type="Gene3D" id="2.40.50.140">
    <property type="entry name" value="Nucleic acid-binding proteins"/>
    <property type="match status" value="1"/>
</dbReference>
<dbReference type="HAMAP" id="MF_01345_B">
    <property type="entry name" value="Ribosomal_uS17_B"/>
    <property type="match status" value="1"/>
</dbReference>
<dbReference type="InterPro" id="IPR012340">
    <property type="entry name" value="NA-bd_OB-fold"/>
</dbReference>
<dbReference type="InterPro" id="IPR000266">
    <property type="entry name" value="Ribosomal_uS17"/>
</dbReference>
<dbReference type="InterPro" id="IPR019984">
    <property type="entry name" value="Ribosomal_uS17_bact/chlr"/>
</dbReference>
<dbReference type="InterPro" id="IPR019979">
    <property type="entry name" value="Ribosomal_uS17_CS"/>
</dbReference>
<dbReference type="NCBIfam" id="NF004123">
    <property type="entry name" value="PRK05610.1"/>
    <property type="match status" value="1"/>
</dbReference>
<dbReference type="NCBIfam" id="TIGR03635">
    <property type="entry name" value="uS17_bact"/>
    <property type="match status" value="1"/>
</dbReference>
<dbReference type="PANTHER" id="PTHR10744">
    <property type="entry name" value="40S RIBOSOMAL PROTEIN S11 FAMILY MEMBER"/>
    <property type="match status" value="1"/>
</dbReference>
<dbReference type="PANTHER" id="PTHR10744:SF1">
    <property type="entry name" value="SMALL RIBOSOMAL SUBUNIT PROTEIN US17M"/>
    <property type="match status" value="1"/>
</dbReference>
<dbReference type="Pfam" id="PF00366">
    <property type="entry name" value="Ribosomal_S17"/>
    <property type="match status" value="1"/>
</dbReference>
<dbReference type="PRINTS" id="PR00973">
    <property type="entry name" value="RIBOSOMALS17"/>
</dbReference>
<dbReference type="SUPFAM" id="SSF50249">
    <property type="entry name" value="Nucleic acid-binding proteins"/>
    <property type="match status" value="1"/>
</dbReference>
<dbReference type="PROSITE" id="PS00056">
    <property type="entry name" value="RIBOSOMAL_S17"/>
    <property type="match status" value="1"/>
</dbReference>
<name>RS17_CHLAB</name>
<protein>
    <recommendedName>
        <fullName evidence="1">Small ribosomal subunit protein uS17</fullName>
    </recommendedName>
    <alternativeName>
        <fullName evidence="2">30S ribosomal protein S17</fullName>
    </alternativeName>
</protein>
<reference key="1">
    <citation type="journal article" date="2005" name="Genome Res.">
        <title>The Chlamydophila abortus genome sequence reveals an array of variable proteins that contribute to interspecies variation.</title>
        <authorList>
            <person name="Thomson N.R."/>
            <person name="Yeats C."/>
            <person name="Bell K."/>
            <person name="Holden M.T.G."/>
            <person name="Bentley S.D."/>
            <person name="Livingstone M."/>
            <person name="Cerdeno-Tarraga A.-M."/>
            <person name="Harris B."/>
            <person name="Doggett J."/>
            <person name="Ormond D."/>
            <person name="Mungall K."/>
            <person name="Clarke K."/>
            <person name="Feltwell T."/>
            <person name="Hance Z."/>
            <person name="Sanders M."/>
            <person name="Quail M.A."/>
            <person name="Price C."/>
            <person name="Barrell B.G."/>
            <person name="Parkhill J."/>
            <person name="Longbottom D."/>
        </authorList>
    </citation>
    <scope>NUCLEOTIDE SEQUENCE [LARGE SCALE GENOMIC DNA]</scope>
    <source>
        <strain>DSM 27085 / S26/3</strain>
    </source>
</reference>
<proteinExistence type="inferred from homology"/>
<gene>
    <name evidence="1" type="primary">rpsQ</name>
    <name type="ordered locus">CAB101</name>
</gene>
<keyword id="KW-0687">Ribonucleoprotein</keyword>
<keyword id="KW-0689">Ribosomal protein</keyword>
<keyword id="KW-0694">RNA-binding</keyword>
<keyword id="KW-0699">rRNA-binding</keyword>